<accession>Q88XX9</accession>
<accession>F9UML2</accession>
<reference key="1">
    <citation type="journal article" date="2003" name="Proc. Natl. Acad. Sci. U.S.A.">
        <title>Complete genome sequence of Lactobacillus plantarum WCFS1.</title>
        <authorList>
            <person name="Kleerebezem M."/>
            <person name="Boekhorst J."/>
            <person name="van Kranenburg R."/>
            <person name="Molenaar D."/>
            <person name="Kuipers O.P."/>
            <person name="Leer R."/>
            <person name="Tarchini R."/>
            <person name="Peters S.A."/>
            <person name="Sandbrink H.M."/>
            <person name="Fiers M.W.E.J."/>
            <person name="Stiekema W."/>
            <person name="Klein Lankhorst R.M."/>
            <person name="Bron P.A."/>
            <person name="Hoffer S.M."/>
            <person name="Nierop Groot M.N."/>
            <person name="Kerkhoven R."/>
            <person name="De Vries M."/>
            <person name="Ursing B."/>
            <person name="De Vos W.M."/>
            <person name="Siezen R.J."/>
        </authorList>
    </citation>
    <scope>NUCLEOTIDE SEQUENCE [LARGE SCALE GENOMIC DNA]</scope>
    <source>
        <strain>ATCC BAA-793 / NCIMB 8826 / WCFS1</strain>
    </source>
</reference>
<reference key="2">
    <citation type="journal article" date="2012" name="J. Bacteriol.">
        <title>Complete resequencing and reannotation of the Lactobacillus plantarum WCFS1 genome.</title>
        <authorList>
            <person name="Siezen R.J."/>
            <person name="Francke C."/>
            <person name="Renckens B."/>
            <person name="Boekhorst J."/>
            <person name="Wels M."/>
            <person name="Kleerebezem M."/>
            <person name="van Hijum S.A."/>
        </authorList>
    </citation>
    <scope>NUCLEOTIDE SEQUENCE [LARGE SCALE GENOMIC DNA]</scope>
    <scope>GENOME REANNOTATION</scope>
    <source>
        <strain>ATCC BAA-793 / NCIMB 8826 / WCFS1</strain>
    </source>
</reference>
<dbReference type="EMBL" id="AL935263">
    <property type="protein sequence ID" value="CCC78451.1"/>
    <property type="molecule type" value="Genomic_DNA"/>
</dbReference>
<dbReference type="RefSeq" id="WP_003641256.1">
    <property type="nucleotide sequence ID" value="NC_004567.2"/>
</dbReference>
<dbReference type="RefSeq" id="YP_004888965.1">
    <property type="nucleotide sequence ID" value="NC_004567.2"/>
</dbReference>
<dbReference type="SMR" id="Q88XX9"/>
<dbReference type="STRING" id="220668.lp_1041"/>
<dbReference type="EnsemblBacteria" id="CCC78451">
    <property type="protein sequence ID" value="CCC78451"/>
    <property type="gene ID" value="lp_1041"/>
</dbReference>
<dbReference type="GeneID" id="89668554"/>
<dbReference type="KEGG" id="lpl:lp_1041"/>
<dbReference type="PATRIC" id="fig|220668.9.peg.878"/>
<dbReference type="eggNOG" id="COG0197">
    <property type="taxonomic scope" value="Bacteria"/>
</dbReference>
<dbReference type="HOGENOM" id="CLU_078858_2_1_9"/>
<dbReference type="OrthoDB" id="9802589at2"/>
<dbReference type="PhylomeDB" id="Q88XX9"/>
<dbReference type="Proteomes" id="UP000000432">
    <property type="component" value="Chromosome"/>
</dbReference>
<dbReference type="GO" id="GO:0022625">
    <property type="term" value="C:cytosolic large ribosomal subunit"/>
    <property type="evidence" value="ECO:0007669"/>
    <property type="project" value="TreeGrafter"/>
</dbReference>
<dbReference type="GO" id="GO:0019843">
    <property type="term" value="F:rRNA binding"/>
    <property type="evidence" value="ECO:0007669"/>
    <property type="project" value="UniProtKB-UniRule"/>
</dbReference>
<dbReference type="GO" id="GO:0003735">
    <property type="term" value="F:structural constituent of ribosome"/>
    <property type="evidence" value="ECO:0007669"/>
    <property type="project" value="InterPro"/>
</dbReference>
<dbReference type="GO" id="GO:0000049">
    <property type="term" value="F:tRNA binding"/>
    <property type="evidence" value="ECO:0007669"/>
    <property type="project" value="UniProtKB-KW"/>
</dbReference>
<dbReference type="GO" id="GO:0006412">
    <property type="term" value="P:translation"/>
    <property type="evidence" value="ECO:0007669"/>
    <property type="project" value="UniProtKB-UniRule"/>
</dbReference>
<dbReference type="CDD" id="cd01433">
    <property type="entry name" value="Ribosomal_L16_L10e"/>
    <property type="match status" value="1"/>
</dbReference>
<dbReference type="FunFam" id="3.90.1170.10:FF:000001">
    <property type="entry name" value="50S ribosomal protein L16"/>
    <property type="match status" value="1"/>
</dbReference>
<dbReference type="Gene3D" id="3.90.1170.10">
    <property type="entry name" value="Ribosomal protein L10e/L16"/>
    <property type="match status" value="1"/>
</dbReference>
<dbReference type="HAMAP" id="MF_01342">
    <property type="entry name" value="Ribosomal_uL16"/>
    <property type="match status" value="1"/>
</dbReference>
<dbReference type="InterPro" id="IPR047873">
    <property type="entry name" value="Ribosomal_uL16"/>
</dbReference>
<dbReference type="InterPro" id="IPR000114">
    <property type="entry name" value="Ribosomal_uL16_bact-type"/>
</dbReference>
<dbReference type="InterPro" id="IPR020798">
    <property type="entry name" value="Ribosomal_uL16_CS"/>
</dbReference>
<dbReference type="InterPro" id="IPR016180">
    <property type="entry name" value="Ribosomal_uL16_dom"/>
</dbReference>
<dbReference type="InterPro" id="IPR036920">
    <property type="entry name" value="Ribosomal_uL16_sf"/>
</dbReference>
<dbReference type="NCBIfam" id="TIGR01164">
    <property type="entry name" value="rplP_bact"/>
    <property type="match status" value="1"/>
</dbReference>
<dbReference type="PANTHER" id="PTHR12220">
    <property type="entry name" value="50S/60S RIBOSOMAL PROTEIN L16"/>
    <property type="match status" value="1"/>
</dbReference>
<dbReference type="PANTHER" id="PTHR12220:SF13">
    <property type="entry name" value="LARGE RIBOSOMAL SUBUNIT PROTEIN UL16M"/>
    <property type="match status" value="1"/>
</dbReference>
<dbReference type="Pfam" id="PF00252">
    <property type="entry name" value="Ribosomal_L16"/>
    <property type="match status" value="1"/>
</dbReference>
<dbReference type="PRINTS" id="PR00060">
    <property type="entry name" value="RIBOSOMALL16"/>
</dbReference>
<dbReference type="SUPFAM" id="SSF54686">
    <property type="entry name" value="Ribosomal protein L16p/L10e"/>
    <property type="match status" value="1"/>
</dbReference>
<dbReference type="PROSITE" id="PS00586">
    <property type="entry name" value="RIBOSOMAL_L16_1"/>
    <property type="match status" value="1"/>
</dbReference>
<dbReference type="PROSITE" id="PS00701">
    <property type="entry name" value="RIBOSOMAL_L16_2"/>
    <property type="match status" value="1"/>
</dbReference>
<evidence type="ECO:0000255" key="1">
    <source>
        <dbReference type="HAMAP-Rule" id="MF_01342"/>
    </source>
</evidence>
<evidence type="ECO:0000305" key="2"/>
<feature type="chain" id="PRO_0000062120" description="Large ribosomal subunit protein uL16">
    <location>
        <begin position="1"/>
        <end position="144"/>
    </location>
</feature>
<sequence length="144" mass="16075">MLVPKRVKYRRVHRGKMRGEAKGGKTVAFGDYGLQTLESHWISNRQIEAARVAMNRYMKRGGKVWIKIFPHKSYTEKGVGVRMGNGKGTPAGWVAPVKRNKIMFEVAGVPEEVAREALRLAGTKLPVKTKIVKREEVGGESDEG</sequence>
<protein>
    <recommendedName>
        <fullName evidence="1">Large ribosomal subunit protein uL16</fullName>
    </recommendedName>
    <alternativeName>
        <fullName evidence="2">50S ribosomal protein L16</fullName>
    </alternativeName>
</protein>
<proteinExistence type="inferred from homology"/>
<gene>
    <name evidence="1" type="primary">rplP</name>
    <name type="ordered locus">lp_1041</name>
</gene>
<organism>
    <name type="scientific">Lactiplantibacillus plantarum (strain ATCC BAA-793 / NCIMB 8826 / WCFS1)</name>
    <name type="common">Lactobacillus plantarum</name>
    <dbReference type="NCBI Taxonomy" id="220668"/>
    <lineage>
        <taxon>Bacteria</taxon>
        <taxon>Bacillati</taxon>
        <taxon>Bacillota</taxon>
        <taxon>Bacilli</taxon>
        <taxon>Lactobacillales</taxon>
        <taxon>Lactobacillaceae</taxon>
        <taxon>Lactiplantibacillus</taxon>
    </lineage>
</organism>
<keyword id="KW-1185">Reference proteome</keyword>
<keyword id="KW-0687">Ribonucleoprotein</keyword>
<keyword id="KW-0689">Ribosomal protein</keyword>
<keyword id="KW-0694">RNA-binding</keyword>
<keyword id="KW-0699">rRNA-binding</keyword>
<keyword id="KW-0820">tRNA-binding</keyword>
<name>RL16_LACPL</name>
<comment type="function">
    <text evidence="1">Binds 23S rRNA and is also seen to make contacts with the A and possibly P site tRNAs.</text>
</comment>
<comment type="subunit">
    <text evidence="1">Part of the 50S ribosomal subunit.</text>
</comment>
<comment type="similarity">
    <text evidence="1">Belongs to the universal ribosomal protein uL16 family.</text>
</comment>